<dbReference type="EMBL" id="KJ412265">
    <property type="protein sequence ID" value="AHX39308.1"/>
    <property type="molecule type" value="Genomic_DNA"/>
</dbReference>
<dbReference type="PaxDb" id="4932-YHR193C-A"/>
<dbReference type="EnsemblFungi" id="YHR193C-A_mRNA">
    <property type="protein sequence ID" value="YHR193C-A"/>
    <property type="gene ID" value="YHR193C-A"/>
</dbReference>
<dbReference type="AGR" id="SGD:S000028785"/>
<dbReference type="SGD" id="S000028785">
    <property type="gene designation" value="YHR193C-A"/>
</dbReference>
<dbReference type="HOGENOM" id="CLU_2005214_0_0_1"/>
<comment type="miscellaneous">
    <text evidence="1">Completely overlaps MDM31.</text>
</comment>
<comment type="caution">
    <text evidence="2">Product of a dubious gene prediction unlikely to encode a functional protein. Because of that it is not part of the S.cerevisiae S288c complete/reference proteome set.</text>
</comment>
<sequence>MNMKMLLTRIHEMNALISSELNGRVDFFKNHRMFILSLVKILLVCTSRESLSVMYFRFDSFFDFLSGGASLPVLDSLEYALSDAAAIDGILKLLRRAGLLAQYTYLATENCRGLLRKGLVKRDI</sequence>
<protein>
    <recommendedName>
        <fullName evidence="1">Putative uncharacterized protein YHR193C-A</fullName>
    </recommendedName>
</protein>
<feature type="chain" id="PRO_0000431029" description="Putative uncharacterized protein YHR193C-A">
    <location>
        <begin position="1"/>
        <end position="124"/>
    </location>
</feature>
<proteinExistence type="uncertain"/>
<evidence type="ECO:0000305" key="1"/>
<evidence type="ECO:0000305" key="2">
    <source>
    </source>
</evidence>
<evidence type="ECO:0000312" key="3">
    <source>
        <dbReference type="SGD" id="S000028785"/>
    </source>
</evidence>
<reference key="1">
    <citation type="journal article" date="1994" name="Science">
        <title>Complete nucleotide sequence of Saccharomyces cerevisiae chromosome VIII.</title>
        <authorList>
            <person name="Johnston M."/>
            <person name="Andrews S."/>
            <person name="Brinkman R."/>
            <person name="Cooper J."/>
            <person name="Ding H."/>
            <person name="Dover J."/>
            <person name="Du Z."/>
            <person name="Favello A."/>
            <person name="Fulton L."/>
            <person name="Gattung S."/>
            <person name="Geisel C."/>
            <person name="Kirsten J."/>
            <person name="Kucaba T."/>
            <person name="Hillier L.W."/>
            <person name="Jier M."/>
            <person name="Johnston L."/>
            <person name="Langston Y."/>
            <person name="Latreille P."/>
            <person name="Louis E.J."/>
            <person name="Macri C."/>
            <person name="Mardis E."/>
            <person name="Menezes S."/>
            <person name="Mouser L."/>
            <person name="Nhan M."/>
            <person name="Rifkin L."/>
            <person name="Riles L."/>
            <person name="St Peter H."/>
            <person name="Trevaskis E."/>
            <person name="Vaughan K."/>
            <person name="Vignati D."/>
            <person name="Wilcox L."/>
            <person name="Wohldman P."/>
            <person name="Waterston R."/>
            <person name="Wilson R."/>
            <person name="Vaudin M."/>
        </authorList>
    </citation>
    <scope>NUCLEOTIDE SEQUENCE [LARGE SCALE GENOMIC DNA]</scope>
    <source>
        <strain>ATCC 204508 / S288c</strain>
    </source>
</reference>
<reference key="2">
    <citation type="journal article" date="2014" name="G3 (Bethesda)">
        <title>The reference genome sequence of Saccharomyces cerevisiae: Then and now.</title>
        <authorList>
            <person name="Engel S.R."/>
            <person name="Dietrich F.S."/>
            <person name="Fisk D.G."/>
            <person name="Binkley G."/>
            <person name="Balakrishnan R."/>
            <person name="Costanzo M.C."/>
            <person name="Dwight S.S."/>
            <person name="Hitz B.C."/>
            <person name="Karra K."/>
            <person name="Nash R.S."/>
            <person name="Weng S."/>
            <person name="Wong E.D."/>
            <person name="Lloyd P."/>
            <person name="Skrzypek M.S."/>
            <person name="Miyasato S.R."/>
            <person name="Simison M."/>
            <person name="Cherry J.M."/>
        </authorList>
    </citation>
    <scope>GENOME REANNOTATION</scope>
    <source>
        <strain>ATCC 204508 / S288c</strain>
    </source>
</reference>
<name>YH193_YEAST</name>
<gene>
    <name evidence="3" type="ordered locus">YHR193C-A</name>
</gene>
<organism>
    <name type="scientific">Saccharomyces cerevisiae (strain ATCC 204508 / S288c)</name>
    <name type="common">Baker's yeast</name>
    <dbReference type="NCBI Taxonomy" id="559292"/>
    <lineage>
        <taxon>Eukaryota</taxon>
        <taxon>Fungi</taxon>
        <taxon>Dikarya</taxon>
        <taxon>Ascomycota</taxon>
        <taxon>Saccharomycotina</taxon>
        <taxon>Saccharomycetes</taxon>
        <taxon>Saccharomycetales</taxon>
        <taxon>Saccharomycetaceae</taxon>
        <taxon>Saccharomyces</taxon>
    </lineage>
</organism>
<accession>A0A023PYH5</accession>